<organism>
    <name type="scientific">Bos taurus</name>
    <name type="common">Bovine</name>
    <dbReference type="NCBI Taxonomy" id="9913"/>
    <lineage>
        <taxon>Eukaryota</taxon>
        <taxon>Metazoa</taxon>
        <taxon>Chordata</taxon>
        <taxon>Craniata</taxon>
        <taxon>Vertebrata</taxon>
        <taxon>Euteleostomi</taxon>
        <taxon>Mammalia</taxon>
        <taxon>Eutheria</taxon>
        <taxon>Laurasiatheria</taxon>
        <taxon>Artiodactyla</taxon>
        <taxon>Ruminantia</taxon>
        <taxon>Pecora</taxon>
        <taxon>Bovidae</taxon>
        <taxon>Bovinae</taxon>
        <taxon>Bos</taxon>
    </lineage>
</organism>
<reference key="1">
    <citation type="submission" date="2006-08" db="EMBL/GenBank/DDBJ databases">
        <authorList>
            <consortium name="NIH - Mammalian Gene Collection (MGC) project"/>
        </authorList>
    </citation>
    <scope>NUCLEOTIDE SEQUENCE [LARGE SCALE MRNA]</scope>
    <source>
        <strain>Hereford</strain>
        <tissue>Fetal liver</tissue>
    </source>
</reference>
<comment type="function">
    <text evidence="1">As part of the exocyst, may play a role in regulated exocytosis of insulin granules.</text>
</comment>
<comment type="subunit">
    <text evidence="1">Interacts with EXOC2, EXOC4 and EXOC5; may be part of the exocyst.</text>
</comment>
<comment type="subcellular location">
    <subcellularLocation>
        <location evidence="1">Cytoplasmic vesicle</location>
        <location evidence="1">Secretory vesicle</location>
    </subcellularLocation>
    <text evidence="1">Colocalizes with insulin granules.</text>
</comment>
<comment type="similarity">
    <text evidence="2">Belongs to the SEC6 family.</text>
</comment>
<accession>Q0VCR8</accession>
<gene>
    <name type="primary">EXOC3L1</name>
</gene>
<protein>
    <recommendedName>
        <fullName>Exocyst complex component 3-like protein</fullName>
    </recommendedName>
</protein>
<proteinExistence type="evidence at transcript level"/>
<dbReference type="EMBL" id="BC120037">
    <property type="protein sequence ID" value="AAI20038.1"/>
    <property type="molecule type" value="mRNA"/>
</dbReference>
<dbReference type="RefSeq" id="NP_001069350.1">
    <property type="nucleotide sequence ID" value="NM_001075882.2"/>
</dbReference>
<dbReference type="SMR" id="Q0VCR8"/>
<dbReference type="FunCoup" id="Q0VCR8">
    <property type="interactions" value="1197"/>
</dbReference>
<dbReference type="STRING" id="9913.ENSBTAP00000015965"/>
<dbReference type="PaxDb" id="9913-ENSBTAP00000015965"/>
<dbReference type="GeneID" id="526306"/>
<dbReference type="KEGG" id="bta:526306"/>
<dbReference type="CTD" id="283849"/>
<dbReference type="eggNOG" id="KOG2286">
    <property type="taxonomic scope" value="Eukaryota"/>
</dbReference>
<dbReference type="InParanoid" id="Q0VCR8"/>
<dbReference type="OrthoDB" id="10047020at2759"/>
<dbReference type="Proteomes" id="UP000009136">
    <property type="component" value="Unplaced"/>
</dbReference>
<dbReference type="GO" id="GO:0000145">
    <property type="term" value="C:exocyst"/>
    <property type="evidence" value="ECO:0000250"/>
    <property type="project" value="UniProtKB"/>
</dbReference>
<dbReference type="GO" id="GO:0030141">
    <property type="term" value="C:secretory granule"/>
    <property type="evidence" value="ECO:0000250"/>
    <property type="project" value="UniProtKB"/>
</dbReference>
<dbReference type="GO" id="GO:0030133">
    <property type="term" value="C:transport vesicle"/>
    <property type="evidence" value="ECO:0007669"/>
    <property type="project" value="UniProtKB-SubCell"/>
</dbReference>
<dbReference type="GO" id="GO:0000149">
    <property type="term" value="F:SNARE binding"/>
    <property type="evidence" value="ECO:0000318"/>
    <property type="project" value="GO_Central"/>
</dbReference>
<dbReference type="GO" id="GO:0051601">
    <property type="term" value="P:exocyst localization"/>
    <property type="evidence" value="ECO:0000318"/>
    <property type="project" value="GO_Central"/>
</dbReference>
<dbReference type="GO" id="GO:0006887">
    <property type="term" value="P:exocytosis"/>
    <property type="evidence" value="ECO:0000250"/>
    <property type="project" value="UniProtKB"/>
</dbReference>
<dbReference type="GO" id="GO:0030072">
    <property type="term" value="P:peptide hormone secretion"/>
    <property type="evidence" value="ECO:0000250"/>
    <property type="project" value="UniProtKB"/>
</dbReference>
<dbReference type="FunFam" id="1.10.357.70:FF:000001">
    <property type="entry name" value="Exocyst complex component 3"/>
    <property type="match status" value="1"/>
</dbReference>
<dbReference type="FunFam" id="1.10.357.50:FF:000009">
    <property type="entry name" value="Exocyst complex component 3-like 1"/>
    <property type="match status" value="1"/>
</dbReference>
<dbReference type="Gene3D" id="1.10.357.50">
    <property type="match status" value="1"/>
</dbReference>
<dbReference type="Gene3D" id="1.10.357.70">
    <property type="entry name" value="Exocyst complex component Sec6, C-terminal domain"/>
    <property type="match status" value="1"/>
</dbReference>
<dbReference type="InterPro" id="IPR010326">
    <property type="entry name" value="EXOC3/Sec6"/>
</dbReference>
<dbReference type="InterPro" id="IPR042532">
    <property type="entry name" value="EXOC3/Sec6_C"/>
</dbReference>
<dbReference type="PANTHER" id="PTHR21292:SF12">
    <property type="entry name" value="EXOCYST COMPLEX COMPONENT 3-LIKE PROTEIN"/>
    <property type="match status" value="1"/>
</dbReference>
<dbReference type="PANTHER" id="PTHR21292">
    <property type="entry name" value="EXOCYST COMPLEX COMPONENT SEC6-RELATED"/>
    <property type="match status" value="1"/>
</dbReference>
<dbReference type="Pfam" id="PF06046">
    <property type="entry name" value="Sec6"/>
    <property type="match status" value="1"/>
</dbReference>
<evidence type="ECO:0000250" key="1"/>
<evidence type="ECO:0000305" key="2"/>
<feature type="chain" id="PRO_0000309473" description="Exocyst complex component 3-like protein">
    <location>
        <begin position="1"/>
        <end position="739"/>
    </location>
</feature>
<feature type="region of interest" description="Mediates interaction with EXOC2, EXOC4 and EXOC5" evidence="1">
    <location>
        <begin position="1"/>
        <end position="370"/>
    </location>
</feature>
<keyword id="KW-0968">Cytoplasmic vesicle</keyword>
<keyword id="KW-0268">Exocytosis</keyword>
<keyword id="KW-1185">Reference proteome</keyword>
<name>EX3L1_BOVIN</name>
<sequence>MDSAARDKTQPALPTGLEWPEQERAEQLARGAALKWASGIFYRPEQLARLGQYRNREVQRTCSLEARIKSVVQSYLEGVKTGVWQLAQALEAVQGAREALGQARGLLRDMAEAAQTLEPLREQVVEHKQLQALSQLLPRLRAVPAAVAHTQTLIDAQRLLEAYVSLRELEQLQEETCVPLGGLELPVFEGLGPLAEALGQAVEAAAGAAGQLARENPALLVAAVRVAEVDAGCTTSLEQAPRDWRQRCLRALQQGLERVHFGTSLQPGPGELAKWLEALRVALPAELAMAEALVAPCCPPHYKVVQLWAHTLHGGLRRCLQQLLEGPELEEADTFTLLHWVLHVYQGPEMMGSLELGPEADVSDLEPLLTLENIEQLEATFVAKVQAKVAQWLQKALDGEVVEWGREQEPDTDLSGFYHSPLPAIVLQILEENIRVTRIVSVSLEQRVHGMALSELSAFLRSFTDALIRFSRDHLRGEAVVPHYVPYLLATLNHQLALSSSVSVLQPKWVVPGVLAPVEAELDKLQKRICRLVLEALLAELQPLFAALPSRRWLSSPELLDDVCKRTARFCQNFQHVRNPAVQLLLVEAERTVVLQYLSALMQGRLVCRGADERTQAAERMQHDAAQLQELFLGLGLEESVQCVPVLLALKELLNLRDPTLLGLVVAGLRQQFPDVSEDHVSALLDLRGDVSREQRLAALSSLRAGPQPSPQAGRRALFSLVPTPAPSLASCFPSGSCA</sequence>